<organism>
    <name type="scientific">Mycobacterium tuberculosis (strain ATCC 25618 / H37Rv)</name>
    <dbReference type="NCBI Taxonomy" id="83332"/>
    <lineage>
        <taxon>Bacteria</taxon>
        <taxon>Bacillati</taxon>
        <taxon>Actinomycetota</taxon>
        <taxon>Actinomycetes</taxon>
        <taxon>Mycobacteriales</taxon>
        <taxon>Mycobacteriaceae</taxon>
        <taxon>Mycobacterium</taxon>
        <taxon>Mycobacterium tuberculosis complex</taxon>
    </lineage>
</organism>
<protein>
    <recommendedName>
        <fullName>Uncharacterized protein Rv0028A</fullName>
    </recommendedName>
</protein>
<name>Y028A_MYCTU</name>
<gene>
    <name type="ordered locus">Rv0028A</name>
</gene>
<accession>P0DMM2</accession>
<dbReference type="EMBL" id="AL123456">
    <property type="status" value="NOT_ANNOTATED_CDS"/>
    <property type="molecule type" value="Genomic_DNA"/>
</dbReference>
<dbReference type="SMR" id="P0DMM2"/>
<dbReference type="InParanoid" id="P0DMM2"/>
<dbReference type="Proteomes" id="UP000001584">
    <property type="component" value="Chromosome"/>
</dbReference>
<feature type="chain" id="PRO_0000430092" description="Uncharacterized protein Rv0028A">
    <location>
        <begin position="1"/>
        <end position="47"/>
    </location>
</feature>
<feature type="region of interest" description="Disordered" evidence="1">
    <location>
        <begin position="24"/>
        <end position="47"/>
    </location>
</feature>
<proteinExistence type="evidence at protein level"/>
<evidence type="ECO:0000256" key="1">
    <source>
        <dbReference type="SAM" id="MobiDB-lite"/>
    </source>
</evidence>
<sequence length="47" mass="5232">MADSALQQQLDEVRALLTRARELFGPNPIEPPTDIAPDPDSTKTWLI</sequence>
<reference key="1">
    <citation type="journal article" date="1998" name="Nature">
        <title>Deciphering the biology of Mycobacterium tuberculosis from the complete genome sequence.</title>
        <authorList>
            <person name="Cole S.T."/>
            <person name="Brosch R."/>
            <person name="Parkhill J."/>
            <person name="Garnier T."/>
            <person name="Churcher C.M."/>
            <person name="Harris D.E."/>
            <person name="Gordon S.V."/>
            <person name="Eiglmeier K."/>
            <person name="Gas S."/>
            <person name="Barry C.E. III"/>
            <person name="Tekaia F."/>
            <person name="Badcock K."/>
            <person name="Basham D."/>
            <person name="Brown D."/>
            <person name="Chillingworth T."/>
            <person name="Connor R."/>
            <person name="Davies R.M."/>
            <person name="Devlin K."/>
            <person name="Feltwell T."/>
            <person name="Gentles S."/>
            <person name="Hamlin N."/>
            <person name="Holroyd S."/>
            <person name="Hornsby T."/>
            <person name="Jagels K."/>
            <person name="Krogh A."/>
            <person name="McLean J."/>
            <person name="Moule S."/>
            <person name="Murphy L.D."/>
            <person name="Oliver S."/>
            <person name="Osborne J."/>
            <person name="Quail M.A."/>
            <person name="Rajandream M.A."/>
            <person name="Rogers J."/>
            <person name="Rutter S."/>
            <person name="Seeger K."/>
            <person name="Skelton S."/>
            <person name="Squares S."/>
            <person name="Squares R."/>
            <person name="Sulston J.E."/>
            <person name="Taylor K."/>
            <person name="Whitehead S."/>
            <person name="Barrell B.G."/>
        </authorList>
    </citation>
    <scope>NUCLEOTIDE SEQUENCE [LARGE SCALE GENOMIC DNA]</scope>
    <source>
        <strain>ATCC 25618 / H37Rv</strain>
    </source>
</reference>
<reference key="2">
    <citation type="journal article" date="2011" name="Mol. Cell. Proteomics">
        <title>Proteogenomic analysis of Mycobacterium tuberculosis by high resolution mass spectrometry.</title>
        <authorList>
            <person name="Kelkar D.S."/>
            <person name="Kumar D."/>
            <person name="Kumar P."/>
            <person name="Balakrishnan L."/>
            <person name="Muthusamy B."/>
            <person name="Yadav A.K."/>
            <person name="Shrivastava P."/>
            <person name="Marimuthu A."/>
            <person name="Anand S."/>
            <person name="Sundaram H."/>
            <person name="Kingsbury R."/>
            <person name="Harsha H.C."/>
            <person name="Nair B."/>
            <person name="Prasad T.S."/>
            <person name="Chauhan D.S."/>
            <person name="Katoch K."/>
            <person name="Katoch V.M."/>
            <person name="Kumar P."/>
            <person name="Chaerkady R."/>
            <person name="Ramachandran S."/>
            <person name="Dash D."/>
            <person name="Pandey A."/>
        </authorList>
    </citation>
    <scope>IDENTIFICATION BY MASS SPECTROMETRY [LARGE SCALE ANALYSIS]</scope>
    <source>
        <strain>ATCC 25618 / H37Rv</strain>
    </source>
</reference>
<keyword id="KW-1185">Reference proteome</keyword>